<dbReference type="EMBL" id="BX571865">
    <property type="protein sequence ID" value="CAE14140.1"/>
    <property type="molecule type" value="Genomic_DNA"/>
</dbReference>
<dbReference type="RefSeq" id="WP_011146117.1">
    <property type="nucleotide sequence ID" value="NC_005126.1"/>
</dbReference>
<dbReference type="SMR" id="P59992"/>
<dbReference type="STRING" id="243265.plu1847"/>
<dbReference type="GeneID" id="48848124"/>
<dbReference type="KEGG" id="plu:plu1847"/>
<dbReference type="eggNOG" id="ENOG5031P80">
    <property type="taxonomic scope" value="Bacteria"/>
</dbReference>
<dbReference type="HOGENOM" id="CLU_144160_0_0_6"/>
<dbReference type="OrthoDB" id="5298036at2"/>
<dbReference type="Proteomes" id="UP000002514">
    <property type="component" value="Chromosome"/>
</dbReference>
<dbReference type="GO" id="GO:0005737">
    <property type="term" value="C:cytoplasm"/>
    <property type="evidence" value="ECO:0007669"/>
    <property type="project" value="UniProtKB-SubCell"/>
</dbReference>
<dbReference type="GO" id="GO:0003677">
    <property type="term" value="F:DNA binding"/>
    <property type="evidence" value="ECO:0007669"/>
    <property type="project" value="UniProtKB-UniRule"/>
</dbReference>
<dbReference type="GO" id="GO:0044780">
    <property type="term" value="P:bacterial-type flagellum assembly"/>
    <property type="evidence" value="ECO:0007669"/>
    <property type="project" value="InterPro"/>
</dbReference>
<dbReference type="GO" id="GO:0045893">
    <property type="term" value="P:positive regulation of DNA-templated transcription"/>
    <property type="evidence" value="ECO:0007669"/>
    <property type="project" value="InterPro"/>
</dbReference>
<dbReference type="GO" id="GO:1902208">
    <property type="term" value="P:regulation of bacterial-type flagellum assembly"/>
    <property type="evidence" value="ECO:0007669"/>
    <property type="project" value="UniProtKB-UniRule"/>
</dbReference>
<dbReference type="Gene3D" id="1.10.4000.10">
    <property type="entry name" value="Flagellar transcriptional activator FlhD"/>
    <property type="match status" value="1"/>
</dbReference>
<dbReference type="HAMAP" id="MF_00725">
    <property type="entry name" value="FlhD"/>
    <property type="match status" value="1"/>
</dbReference>
<dbReference type="InterPro" id="IPR023559">
    <property type="entry name" value="Flagellar_FlhD"/>
</dbReference>
<dbReference type="InterPro" id="IPR036194">
    <property type="entry name" value="FlhD_sf"/>
</dbReference>
<dbReference type="NCBIfam" id="NF002783">
    <property type="entry name" value="PRK02909.1-1"/>
    <property type="match status" value="1"/>
</dbReference>
<dbReference type="Pfam" id="PF05247">
    <property type="entry name" value="FlhD"/>
    <property type="match status" value="1"/>
</dbReference>
<dbReference type="SUPFAM" id="SSF63592">
    <property type="entry name" value="Flagellar transcriptional activator FlhD"/>
    <property type="match status" value="1"/>
</dbReference>
<protein>
    <recommendedName>
        <fullName evidence="1">Flagellar transcriptional regulator FlhD</fullName>
    </recommendedName>
</protein>
<keyword id="KW-0010">Activator</keyword>
<keyword id="KW-1005">Bacterial flagellum biogenesis</keyword>
<keyword id="KW-0963">Cytoplasm</keyword>
<keyword id="KW-1015">Disulfide bond</keyword>
<keyword id="KW-0238">DNA-binding</keyword>
<keyword id="KW-1185">Reference proteome</keyword>
<keyword id="KW-0804">Transcription</keyword>
<keyword id="KW-0805">Transcription regulation</keyword>
<gene>
    <name evidence="1" type="primary">flhD</name>
    <name type="ordered locus">plu1847</name>
</gene>
<feature type="chain" id="PRO_0000182720" description="Flagellar transcriptional regulator FlhD">
    <location>
        <begin position="1"/>
        <end position="117"/>
    </location>
</feature>
<feature type="disulfide bond" description="Interchain" evidence="1">
    <location>
        <position position="65"/>
    </location>
</feature>
<reference key="1">
    <citation type="journal article" date="2003" name="Nat. Biotechnol.">
        <title>The genome sequence of the entomopathogenic bacterium Photorhabdus luminescens.</title>
        <authorList>
            <person name="Duchaud E."/>
            <person name="Rusniok C."/>
            <person name="Frangeul L."/>
            <person name="Buchrieser C."/>
            <person name="Givaudan A."/>
            <person name="Taourit S."/>
            <person name="Bocs S."/>
            <person name="Boursaux-Eude C."/>
            <person name="Chandler M."/>
            <person name="Charles J.-F."/>
            <person name="Dassa E."/>
            <person name="Derose R."/>
            <person name="Derzelle S."/>
            <person name="Freyssinet G."/>
            <person name="Gaudriault S."/>
            <person name="Medigue C."/>
            <person name="Lanois A."/>
            <person name="Powell K."/>
            <person name="Siguier P."/>
            <person name="Vincent R."/>
            <person name="Wingate V."/>
            <person name="Zouine M."/>
            <person name="Glaser P."/>
            <person name="Boemare N."/>
            <person name="Danchin A."/>
            <person name="Kunst F."/>
        </authorList>
    </citation>
    <scope>NUCLEOTIDE SEQUENCE [LARGE SCALE GENOMIC DNA]</scope>
    <source>
        <strain>DSM 15139 / CIP 105565 / TT01</strain>
    </source>
</reference>
<evidence type="ECO:0000255" key="1">
    <source>
        <dbReference type="HAMAP-Rule" id="MF_00725"/>
    </source>
</evidence>
<name>FLHD_PHOLL</name>
<organism>
    <name type="scientific">Photorhabdus laumondii subsp. laumondii (strain DSM 15139 / CIP 105565 / TT01)</name>
    <name type="common">Photorhabdus luminescens subsp. laumondii</name>
    <dbReference type="NCBI Taxonomy" id="243265"/>
    <lineage>
        <taxon>Bacteria</taxon>
        <taxon>Pseudomonadati</taxon>
        <taxon>Pseudomonadota</taxon>
        <taxon>Gammaproteobacteria</taxon>
        <taxon>Enterobacterales</taxon>
        <taxon>Morganellaceae</taxon>
        <taxon>Photorhabdus</taxon>
    </lineage>
</organism>
<proteinExistence type="inferred from homology"/>
<sequence>MSTVELLKHIYDINLSYLLLAQRLINHEKASAMFRLGISDSMADTLSELTLPQLVKLAETNQLVCNFRFEESETIQQLTRESRVDDLQQIHTGILLSTHLFQKLFSKKDDTSVKKRA</sequence>
<accession>P59992</accession>
<comment type="function">
    <text evidence="1">Functions in complex with FlhC as a master transcriptional regulator that regulates transcription of several flagellar and non-flagellar operons by binding to their promoter region. Activates expression of class 2 flagellar genes, including fliA, which is a flagellum-specific sigma factor that turns on the class 3 genes. Also regulates genes whose products function in a variety of physiological pathways.</text>
</comment>
<comment type="subunit">
    <text evidence="1">Homodimer; disulfide-linked. Forms a heterohexamer composed of two FlhC and four FlhD subunits. Each FlhC binds a FlhD dimer, forming a heterotrimer, and a hexamer assembles by dimerization of two heterotrimers.</text>
</comment>
<comment type="subcellular location">
    <subcellularLocation>
        <location evidence="1">Cytoplasm</location>
    </subcellularLocation>
</comment>
<comment type="domain">
    <text evidence="1">The C-terminal region contains a putative helix-turn-helix (HTH) motif, suggesting that this region may bind DNA.</text>
</comment>
<comment type="similarity">
    <text evidence="1">Belongs to the FlhD family.</text>
</comment>